<accession>Q8EPU9</accession>
<dbReference type="EC" id="1.1.1.25" evidence="1"/>
<dbReference type="EMBL" id="BA000028">
    <property type="protein sequence ID" value="BAC13943.1"/>
    <property type="molecule type" value="Genomic_DNA"/>
</dbReference>
<dbReference type="RefSeq" id="WP_011066384.1">
    <property type="nucleotide sequence ID" value="NC_004193.1"/>
</dbReference>
<dbReference type="SMR" id="Q8EPU9"/>
<dbReference type="STRING" id="221109.gene:10734233"/>
<dbReference type="KEGG" id="oih:OB1987"/>
<dbReference type="eggNOG" id="COG0169">
    <property type="taxonomic scope" value="Bacteria"/>
</dbReference>
<dbReference type="HOGENOM" id="CLU_044063_2_0_9"/>
<dbReference type="OrthoDB" id="9792692at2"/>
<dbReference type="PhylomeDB" id="Q8EPU9"/>
<dbReference type="UniPathway" id="UPA00053">
    <property type="reaction ID" value="UER00087"/>
</dbReference>
<dbReference type="Proteomes" id="UP000000822">
    <property type="component" value="Chromosome"/>
</dbReference>
<dbReference type="GO" id="GO:0005829">
    <property type="term" value="C:cytosol"/>
    <property type="evidence" value="ECO:0007669"/>
    <property type="project" value="TreeGrafter"/>
</dbReference>
<dbReference type="GO" id="GO:0050661">
    <property type="term" value="F:NADP binding"/>
    <property type="evidence" value="ECO:0007669"/>
    <property type="project" value="InterPro"/>
</dbReference>
<dbReference type="GO" id="GO:0004764">
    <property type="term" value="F:shikimate 3-dehydrogenase (NADP+) activity"/>
    <property type="evidence" value="ECO:0007669"/>
    <property type="project" value="UniProtKB-UniRule"/>
</dbReference>
<dbReference type="GO" id="GO:0008652">
    <property type="term" value="P:amino acid biosynthetic process"/>
    <property type="evidence" value="ECO:0007669"/>
    <property type="project" value="UniProtKB-KW"/>
</dbReference>
<dbReference type="GO" id="GO:0009073">
    <property type="term" value="P:aromatic amino acid family biosynthetic process"/>
    <property type="evidence" value="ECO:0007669"/>
    <property type="project" value="UniProtKB-KW"/>
</dbReference>
<dbReference type="GO" id="GO:0009423">
    <property type="term" value="P:chorismate biosynthetic process"/>
    <property type="evidence" value="ECO:0007669"/>
    <property type="project" value="UniProtKB-UniRule"/>
</dbReference>
<dbReference type="GO" id="GO:0019632">
    <property type="term" value="P:shikimate metabolic process"/>
    <property type="evidence" value="ECO:0007669"/>
    <property type="project" value="InterPro"/>
</dbReference>
<dbReference type="CDD" id="cd01065">
    <property type="entry name" value="NAD_bind_Shikimate_DH"/>
    <property type="match status" value="1"/>
</dbReference>
<dbReference type="Gene3D" id="3.40.50.10860">
    <property type="entry name" value="Leucine Dehydrogenase, chain A, domain 1"/>
    <property type="match status" value="1"/>
</dbReference>
<dbReference type="Gene3D" id="3.40.50.720">
    <property type="entry name" value="NAD(P)-binding Rossmann-like Domain"/>
    <property type="match status" value="1"/>
</dbReference>
<dbReference type="HAMAP" id="MF_00222">
    <property type="entry name" value="Shikimate_DH_AroE"/>
    <property type="match status" value="1"/>
</dbReference>
<dbReference type="InterPro" id="IPR046346">
    <property type="entry name" value="Aminoacid_DH-like_N_sf"/>
</dbReference>
<dbReference type="InterPro" id="IPR036291">
    <property type="entry name" value="NAD(P)-bd_dom_sf"/>
</dbReference>
<dbReference type="InterPro" id="IPR041121">
    <property type="entry name" value="SDH_C"/>
</dbReference>
<dbReference type="InterPro" id="IPR011342">
    <property type="entry name" value="Shikimate_DH"/>
</dbReference>
<dbReference type="InterPro" id="IPR013708">
    <property type="entry name" value="Shikimate_DH-bd_N"/>
</dbReference>
<dbReference type="InterPro" id="IPR022893">
    <property type="entry name" value="Shikimate_DH_fam"/>
</dbReference>
<dbReference type="InterPro" id="IPR006151">
    <property type="entry name" value="Shikm_DH/Glu-tRNA_Rdtase"/>
</dbReference>
<dbReference type="NCBIfam" id="TIGR00507">
    <property type="entry name" value="aroE"/>
    <property type="match status" value="1"/>
</dbReference>
<dbReference type="PANTHER" id="PTHR21089:SF1">
    <property type="entry name" value="BIFUNCTIONAL 3-DEHYDROQUINATE DEHYDRATASE_SHIKIMATE DEHYDROGENASE, CHLOROPLASTIC"/>
    <property type="match status" value="1"/>
</dbReference>
<dbReference type="PANTHER" id="PTHR21089">
    <property type="entry name" value="SHIKIMATE DEHYDROGENASE"/>
    <property type="match status" value="1"/>
</dbReference>
<dbReference type="Pfam" id="PF18317">
    <property type="entry name" value="SDH_C"/>
    <property type="match status" value="1"/>
</dbReference>
<dbReference type="Pfam" id="PF01488">
    <property type="entry name" value="Shikimate_DH"/>
    <property type="match status" value="1"/>
</dbReference>
<dbReference type="Pfam" id="PF08501">
    <property type="entry name" value="Shikimate_dh_N"/>
    <property type="match status" value="1"/>
</dbReference>
<dbReference type="SUPFAM" id="SSF53223">
    <property type="entry name" value="Aminoacid dehydrogenase-like, N-terminal domain"/>
    <property type="match status" value="1"/>
</dbReference>
<dbReference type="SUPFAM" id="SSF51735">
    <property type="entry name" value="NAD(P)-binding Rossmann-fold domains"/>
    <property type="match status" value="1"/>
</dbReference>
<protein>
    <recommendedName>
        <fullName evidence="1">Shikimate dehydrogenase (NADP(+))</fullName>
        <shortName evidence="1">SDH</shortName>
        <ecNumber evidence="1">1.1.1.25</ecNumber>
    </recommendedName>
</protein>
<feature type="chain" id="PRO_1000058665" description="Shikimate dehydrogenase (NADP(+))">
    <location>
        <begin position="1"/>
        <end position="276"/>
    </location>
</feature>
<feature type="active site" description="Proton acceptor" evidence="1">
    <location>
        <position position="67"/>
    </location>
</feature>
<feature type="binding site" evidence="1">
    <location>
        <begin position="15"/>
        <end position="17"/>
    </location>
    <ligand>
        <name>shikimate</name>
        <dbReference type="ChEBI" id="CHEBI:36208"/>
    </ligand>
</feature>
<feature type="binding site" evidence="1">
    <location>
        <position position="63"/>
    </location>
    <ligand>
        <name>shikimate</name>
        <dbReference type="ChEBI" id="CHEBI:36208"/>
    </ligand>
</feature>
<feature type="binding site" evidence="1">
    <location>
        <position position="79"/>
    </location>
    <ligand>
        <name>NADP(+)</name>
        <dbReference type="ChEBI" id="CHEBI:58349"/>
    </ligand>
</feature>
<feature type="binding site" evidence="1">
    <location>
        <position position="88"/>
    </location>
    <ligand>
        <name>shikimate</name>
        <dbReference type="ChEBI" id="CHEBI:36208"/>
    </ligand>
</feature>
<feature type="binding site" evidence="1">
    <location>
        <position position="103"/>
    </location>
    <ligand>
        <name>shikimate</name>
        <dbReference type="ChEBI" id="CHEBI:36208"/>
    </ligand>
</feature>
<feature type="binding site" evidence="1">
    <location>
        <begin position="130"/>
        <end position="134"/>
    </location>
    <ligand>
        <name>NADP(+)</name>
        <dbReference type="ChEBI" id="CHEBI:58349"/>
    </ligand>
</feature>
<feature type="binding site" evidence="1">
    <location>
        <begin position="154"/>
        <end position="159"/>
    </location>
    <ligand>
        <name>NADP(+)</name>
        <dbReference type="ChEBI" id="CHEBI:58349"/>
    </ligand>
</feature>
<feature type="binding site" evidence="1">
    <location>
        <position position="217"/>
    </location>
    <ligand>
        <name>NADP(+)</name>
        <dbReference type="ChEBI" id="CHEBI:58349"/>
    </ligand>
</feature>
<feature type="binding site" evidence="1">
    <location>
        <position position="219"/>
    </location>
    <ligand>
        <name>shikimate</name>
        <dbReference type="ChEBI" id="CHEBI:36208"/>
    </ligand>
</feature>
<feature type="binding site" evidence="1">
    <location>
        <position position="240"/>
    </location>
    <ligand>
        <name>NADP(+)</name>
        <dbReference type="ChEBI" id="CHEBI:58349"/>
    </ligand>
</feature>
<comment type="function">
    <text evidence="1">Involved in the biosynthesis of the chorismate, which leads to the biosynthesis of aromatic amino acids. Catalyzes the reversible NADPH linked reduction of 3-dehydroshikimate (DHSA) to yield shikimate (SA).</text>
</comment>
<comment type="catalytic activity">
    <reaction evidence="1">
        <text>shikimate + NADP(+) = 3-dehydroshikimate + NADPH + H(+)</text>
        <dbReference type="Rhea" id="RHEA:17737"/>
        <dbReference type="ChEBI" id="CHEBI:15378"/>
        <dbReference type="ChEBI" id="CHEBI:16630"/>
        <dbReference type="ChEBI" id="CHEBI:36208"/>
        <dbReference type="ChEBI" id="CHEBI:57783"/>
        <dbReference type="ChEBI" id="CHEBI:58349"/>
        <dbReference type="EC" id="1.1.1.25"/>
    </reaction>
</comment>
<comment type="pathway">
    <text evidence="1">Metabolic intermediate biosynthesis; chorismate biosynthesis; chorismate from D-erythrose 4-phosphate and phosphoenolpyruvate: step 4/7.</text>
</comment>
<comment type="subunit">
    <text evidence="1">Homodimer.</text>
</comment>
<comment type="similarity">
    <text evidence="1">Belongs to the shikimate dehydrogenase family.</text>
</comment>
<evidence type="ECO:0000255" key="1">
    <source>
        <dbReference type="HAMAP-Rule" id="MF_00222"/>
    </source>
</evidence>
<sequence>MTLSLKLIGYPIEHSMSPWIHNEFLKRSNLEGTYELFEISPEESFEDNVTTLKKSVLTGFNVTVPYKQKIMQFLDEVDDTANLMGAVNTVSIRDGKWIGYNTDGIGYLRSLYAAYPFLKGVTNKRVLILGAGGAARGIFHALVNEGYNNIKIANRTLSRAESIIGTNKQALAISLEEAAEELHQFDLVIQTSAVGMNEPRSIIILDRINEDTVVSDIVYQPLETHFLQLAKQRTPYIHHGHTMLLYQAQAAFEIWTGTNVNVSGMDMQIEQILKGR</sequence>
<keyword id="KW-0028">Amino-acid biosynthesis</keyword>
<keyword id="KW-0057">Aromatic amino acid biosynthesis</keyword>
<keyword id="KW-0521">NADP</keyword>
<keyword id="KW-0560">Oxidoreductase</keyword>
<keyword id="KW-1185">Reference proteome</keyword>
<name>AROE_OCEIH</name>
<proteinExistence type="inferred from homology"/>
<reference key="1">
    <citation type="journal article" date="2002" name="Nucleic Acids Res.">
        <title>Genome sequence of Oceanobacillus iheyensis isolated from the Iheya Ridge and its unexpected adaptive capabilities to extreme environments.</title>
        <authorList>
            <person name="Takami H."/>
            <person name="Takaki Y."/>
            <person name="Uchiyama I."/>
        </authorList>
    </citation>
    <scope>NUCLEOTIDE SEQUENCE [LARGE SCALE GENOMIC DNA]</scope>
    <source>
        <strain>DSM 14371 / CIP 107618 / JCM 11309 / KCTC 3954 / HTE831</strain>
    </source>
</reference>
<organism>
    <name type="scientific">Oceanobacillus iheyensis (strain DSM 14371 / CIP 107618 / JCM 11309 / KCTC 3954 / HTE831)</name>
    <dbReference type="NCBI Taxonomy" id="221109"/>
    <lineage>
        <taxon>Bacteria</taxon>
        <taxon>Bacillati</taxon>
        <taxon>Bacillota</taxon>
        <taxon>Bacilli</taxon>
        <taxon>Bacillales</taxon>
        <taxon>Bacillaceae</taxon>
        <taxon>Oceanobacillus</taxon>
    </lineage>
</organism>
<gene>
    <name evidence="1" type="primary">aroE</name>
    <name type="ordered locus">OB1987</name>
</gene>